<reference key="1">
    <citation type="journal article" date="2009" name="PLoS ONE">
        <title>Salmonella paratyphi C: genetic divergence from Salmonella choleraesuis and pathogenic convergence with Salmonella typhi.</title>
        <authorList>
            <person name="Liu W.-Q."/>
            <person name="Feng Y."/>
            <person name="Wang Y."/>
            <person name="Zou Q.-H."/>
            <person name="Chen F."/>
            <person name="Guo J.-T."/>
            <person name="Peng Y.-H."/>
            <person name="Jin Y."/>
            <person name="Li Y.-G."/>
            <person name="Hu S.-N."/>
            <person name="Johnston R.N."/>
            <person name="Liu G.-R."/>
            <person name="Liu S.-L."/>
        </authorList>
    </citation>
    <scope>NUCLEOTIDE SEQUENCE [LARGE SCALE GENOMIC DNA]</scope>
    <source>
        <strain>RKS4594</strain>
    </source>
</reference>
<gene>
    <name evidence="1" type="primary">yoaH</name>
    <name type="ordered locus">SPC_1906</name>
</gene>
<name>YOAH_SALPC</name>
<sequence>MFAGLPSLSHEQQQKAVERIQELMSQGMSSGEAIAQVAGELRANHTGERIVARFEDEDE</sequence>
<organism>
    <name type="scientific">Salmonella paratyphi C (strain RKS4594)</name>
    <dbReference type="NCBI Taxonomy" id="476213"/>
    <lineage>
        <taxon>Bacteria</taxon>
        <taxon>Pseudomonadati</taxon>
        <taxon>Pseudomonadota</taxon>
        <taxon>Gammaproteobacteria</taxon>
        <taxon>Enterobacterales</taxon>
        <taxon>Enterobacteriaceae</taxon>
        <taxon>Salmonella</taxon>
    </lineage>
</organism>
<evidence type="ECO:0000255" key="1">
    <source>
        <dbReference type="HAMAP-Rule" id="MF_00507"/>
    </source>
</evidence>
<proteinExistence type="inferred from homology"/>
<comment type="similarity">
    <text evidence="1">Belongs to the UPF0181 family.</text>
</comment>
<dbReference type="EMBL" id="CP000857">
    <property type="protein sequence ID" value="ACN46043.1"/>
    <property type="molecule type" value="Genomic_DNA"/>
</dbReference>
<dbReference type="RefSeq" id="WP_000457328.1">
    <property type="nucleotide sequence ID" value="NC_012125.1"/>
</dbReference>
<dbReference type="SMR" id="C0Q311"/>
<dbReference type="KEGG" id="sei:SPC_1906"/>
<dbReference type="HOGENOM" id="CLU_185263_0_0_6"/>
<dbReference type="Proteomes" id="UP000001599">
    <property type="component" value="Chromosome"/>
</dbReference>
<dbReference type="HAMAP" id="MF_00507">
    <property type="entry name" value="UPF0181"/>
    <property type="match status" value="1"/>
</dbReference>
<dbReference type="InterPro" id="IPR005371">
    <property type="entry name" value="UPF0181"/>
</dbReference>
<dbReference type="NCBIfam" id="NF003476">
    <property type="entry name" value="PRK05114.1"/>
    <property type="match status" value="1"/>
</dbReference>
<dbReference type="Pfam" id="PF03701">
    <property type="entry name" value="UPF0181"/>
    <property type="match status" value="1"/>
</dbReference>
<feature type="chain" id="PRO_1000197849" description="UPF0181 protein YoaH">
    <location>
        <begin position="1"/>
        <end position="59"/>
    </location>
</feature>
<protein>
    <recommendedName>
        <fullName evidence="1">UPF0181 protein YoaH</fullName>
    </recommendedName>
</protein>
<accession>C0Q311</accession>